<reference key="1">
    <citation type="journal article" date="2005" name="Science">
        <title>The transcriptional landscape of the mammalian genome.</title>
        <authorList>
            <person name="Carninci P."/>
            <person name="Kasukawa T."/>
            <person name="Katayama S."/>
            <person name="Gough J."/>
            <person name="Frith M.C."/>
            <person name="Maeda N."/>
            <person name="Oyama R."/>
            <person name="Ravasi T."/>
            <person name="Lenhard B."/>
            <person name="Wells C."/>
            <person name="Kodzius R."/>
            <person name="Shimokawa K."/>
            <person name="Bajic V.B."/>
            <person name="Brenner S.E."/>
            <person name="Batalov S."/>
            <person name="Forrest A.R."/>
            <person name="Zavolan M."/>
            <person name="Davis M.J."/>
            <person name="Wilming L.G."/>
            <person name="Aidinis V."/>
            <person name="Allen J.E."/>
            <person name="Ambesi-Impiombato A."/>
            <person name="Apweiler R."/>
            <person name="Aturaliya R.N."/>
            <person name="Bailey T.L."/>
            <person name="Bansal M."/>
            <person name="Baxter L."/>
            <person name="Beisel K.W."/>
            <person name="Bersano T."/>
            <person name="Bono H."/>
            <person name="Chalk A.M."/>
            <person name="Chiu K.P."/>
            <person name="Choudhary V."/>
            <person name="Christoffels A."/>
            <person name="Clutterbuck D.R."/>
            <person name="Crowe M.L."/>
            <person name="Dalla E."/>
            <person name="Dalrymple B.P."/>
            <person name="de Bono B."/>
            <person name="Della Gatta G."/>
            <person name="di Bernardo D."/>
            <person name="Down T."/>
            <person name="Engstrom P."/>
            <person name="Fagiolini M."/>
            <person name="Faulkner G."/>
            <person name="Fletcher C.F."/>
            <person name="Fukushima T."/>
            <person name="Furuno M."/>
            <person name="Futaki S."/>
            <person name="Gariboldi M."/>
            <person name="Georgii-Hemming P."/>
            <person name="Gingeras T.R."/>
            <person name="Gojobori T."/>
            <person name="Green R.E."/>
            <person name="Gustincich S."/>
            <person name="Harbers M."/>
            <person name="Hayashi Y."/>
            <person name="Hensch T.K."/>
            <person name="Hirokawa N."/>
            <person name="Hill D."/>
            <person name="Huminiecki L."/>
            <person name="Iacono M."/>
            <person name="Ikeo K."/>
            <person name="Iwama A."/>
            <person name="Ishikawa T."/>
            <person name="Jakt M."/>
            <person name="Kanapin A."/>
            <person name="Katoh M."/>
            <person name="Kawasawa Y."/>
            <person name="Kelso J."/>
            <person name="Kitamura H."/>
            <person name="Kitano H."/>
            <person name="Kollias G."/>
            <person name="Krishnan S.P."/>
            <person name="Kruger A."/>
            <person name="Kummerfeld S.K."/>
            <person name="Kurochkin I.V."/>
            <person name="Lareau L.F."/>
            <person name="Lazarevic D."/>
            <person name="Lipovich L."/>
            <person name="Liu J."/>
            <person name="Liuni S."/>
            <person name="McWilliam S."/>
            <person name="Madan Babu M."/>
            <person name="Madera M."/>
            <person name="Marchionni L."/>
            <person name="Matsuda H."/>
            <person name="Matsuzawa S."/>
            <person name="Miki H."/>
            <person name="Mignone F."/>
            <person name="Miyake S."/>
            <person name="Morris K."/>
            <person name="Mottagui-Tabar S."/>
            <person name="Mulder N."/>
            <person name="Nakano N."/>
            <person name="Nakauchi H."/>
            <person name="Ng P."/>
            <person name="Nilsson R."/>
            <person name="Nishiguchi S."/>
            <person name="Nishikawa S."/>
            <person name="Nori F."/>
            <person name="Ohara O."/>
            <person name="Okazaki Y."/>
            <person name="Orlando V."/>
            <person name="Pang K.C."/>
            <person name="Pavan W.J."/>
            <person name="Pavesi G."/>
            <person name="Pesole G."/>
            <person name="Petrovsky N."/>
            <person name="Piazza S."/>
            <person name="Reed J."/>
            <person name="Reid J.F."/>
            <person name="Ring B.Z."/>
            <person name="Ringwald M."/>
            <person name="Rost B."/>
            <person name="Ruan Y."/>
            <person name="Salzberg S.L."/>
            <person name="Sandelin A."/>
            <person name="Schneider C."/>
            <person name="Schoenbach C."/>
            <person name="Sekiguchi K."/>
            <person name="Semple C.A."/>
            <person name="Seno S."/>
            <person name="Sessa L."/>
            <person name="Sheng Y."/>
            <person name="Shibata Y."/>
            <person name="Shimada H."/>
            <person name="Shimada K."/>
            <person name="Silva D."/>
            <person name="Sinclair B."/>
            <person name="Sperling S."/>
            <person name="Stupka E."/>
            <person name="Sugiura K."/>
            <person name="Sultana R."/>
            <person name="Takenaka Y."/>
            <person name="Taki K."/>
            <person name="Tammoja K."/>
            <person name="Tan S.L."/>
            <person name="Tang S."/>
            <person name="Taylor M.S."/>
            <person name="Tegner J."/>
            <person name="Teichmann S.A."/>
            <person name="Ueda H.R."/>
            <person name="van Nimwegen E."/>
            <person name="Verardo R."/>
            <person name="Wei C.L."/>
            <person name="Yagi K."/>
            <person name="Yamanishi H."/>
            <person name="Zabarovsky E."/>
            <person name="Zhu S."/>
            <person name="Zimmer A."/>
            <person name="Hide W."/>
            <person name="Bult C."/>
            <person name="Grimmond S.M."/>
            <person name="Teasdale R.D."/>
            <person name="Liu E.T."/>
            <person name="Brusic V."/>
            <person name="Quackenbush J."/>
            <person name="Wahlestedt C."/>
            <person name="Mattick J.S."/>
            <person name="Hume D.A."/>
            <person name="Kai C."/>
            <person name="Sasaki D."/>
            <person name="Tomaru Y."/>
            <person name="Fukuda S."/>
            <person name="Kanamori-Katayama M."/>
            <person name="Suzuki M."/>
            <person name="Aoki J."/>
            <person name="Arakawa T."/>
            <person name="Iida J."/>
            <person name="Imamura K."/>
            <person name="Itoh M."/>
            <person name="Kato T."/>
            <person name="Kawaji H."/>
            <person name="Kawagashira N."/>
            <person name="Kawashima T."/>
            <person name="Kojima M."/>
            <person name="Kondo S."/>
            <person name="Konno H."/>
            <person name="Nakano K."/>
            <person name="Ninomiya N."/>
            <person name="Nishio T."/>
            <person name="Okada M."/>
            <person name="Plessy C."/>
            <person name="Shibata K."/>
            <person name="Shiraki T."/>
            <person name="Suzuki S."/>
            <person name="Tagami M."/>
            <person name="Waki K."/>
            <person name="Watahiki A."/>
            <person name="Okamura-Oho Y."/>
            <person name="Suzuki H."/>
            <person name="Kawai J."/>
            <person name="Hayashizaki Y."/>
        </authorList>
    </citation>
    <scope>NUCLEOTIDE SEQUENCE [LARGE SCALE MRNA] (ISOFORM 3)</scope>
    <source>
        <strain>C57BL/6J</strain>
        <tissue>Cerebellum</tissue>
        <tissue>Eye</tissue>
        <tissue>Retina</tissue>
    </source>
</reference>
<reference key="2">
    <citation type="journal article" date="2004" name="Genome Res.">
        <title>The status, quality, and expansion of the NIH full-length cDNA project: the Mammalian Gene Collection (MGC).</title>
        <authorList>
            <consortium name="The MGC Project Team"/>
        </authorList>
    </citation>
    <scope>NUCLEOTIDE SEQUENCE [LARGE SCALE MRNA] (ISOFORM 2)</scope>
    <source>
        <strain>C57BL/6J</strain>
        <tissue>Brain</tissue>
    </source>
</reference>
<reference key="3">
    <citation type="journal article" date="2003" name="J. Biol. Chem.">
        <title>Conservation within the RIC-3 gene family. Effectors of mammalian nicotinic acetylcholine receptor expression.</title>
        <authorList>
            <person name="Halevi S."/>
            <person name="Yassin L."/>
            <person name="Eshel M."/>
            <person name="Sala F."/>
            <person name="Sala S."/>
            <person name="Criado M."/>
            <person name="Treinin M."/>
        </authorList>
    </citation>
    <scope>TISSUE SPECIFICITY</scope>
</reference>
<reference key="4">
    <citation type="journal article" date="2009" name="J. Neurosci.">
        <title>Mouse RIC-3, an endoplasmic reticulum chaperone, promotes assembly of the alpha7 acetylcholine receptor through a cytoplasmic coiled-coil domain.</title>
        <authorList>
            <person name="Wang Y."/>
            <person name="Yao Y."/>
            <person name="Tang X.Q."/>
            <person name="Wang Z.Z."/>
        </authorList>
    </citation>
    <scope>SUBCELLULAR LOCATION</scope>
    <scope>TOPOLOGY</scope>
    <scope>FUNCTION</scope>
    <scope>COILED-COIL REGION</scope>
    <scope>SIGNAL SEQUENCE CLEAVAGE SITE</scope>
</reference>
<reference key="5">
    <citation type="journal article" date="2020" name="Biomolecules">
        <title>Why Does Knocking Out NACHO, But Not RIC3, Completely Block Expression of alpha7 Nicotinic Receptors in Mouse Brain?</title>
        <authorList>
            <person name="Deshpande A."/>
            <person name="Vinayakamoorthy R.M."/>
            <person name="Garg B.K."/>
            <person name="Thummapudi J.P."/>
            <person name="Oza G."/>
            <person name="Adhikari K."/>
            <person name="Agarwal A."/>
            <person name="Dalvi P."/>
            <person name="Iyer S."/>
            <person name="Thulasi Raman S."/>
            <person name="Ramesh V."/>
            <person name="Rameshbabu A."/>
            <person name="Rezvaya A."/>
            <person name="Sukumaran S."/>
            <person name="Swaminathan S."/>
            <person name="Tilak B."/>
            <person name="Wang Z."/>
            <person name="Tran P.V."/>
            <person name="Loring R.H."/>
        </authorList>
    </citation>
    <scope>FUNCTION</scope>
</reference>
<protein>
    <recommendedName>
        <fullName>Protein RIC-3</fullName>
    </recommendedName>
    <alternativeName>
        <fullName>Resistant to inhibitor of cholinesterase 3</fullName>
    </alternativeName>
</protein>
<gene>
    <name type="primary">Ric3</name>
</gene>
<sequence>MAYSTVQRVALASGLVLAVSLLLPKAFLSRGKRPEPPPGPEGKLDRFPPMMHHHSAPSDGQTPGARFQRSHLAEAFAKAKGAGGGAGGGGSGRGLMGQIIPIYGFGIFLYILYILFKLSKGKTAEDRNCSTAPPGNAHRKITNFELVQLQEKLKETEEAMEKLINRVGPNGESRAQAVTSDQEKRLLHQLREITRVMKEGKFIDTSPEKEAEEAPYMEDWEGYPEETYPIYDLSDGIKRRQETILVDYPDLKEPSAEEIAEQMGEIEEEGSERLSWDHLPTDPGAQKDNSVAPCDPKPESCSCCVHEEEDPAVLAENAGFSADGYSEQEEATKENLPQDFTNEGLGVSTDNAHVGGMLRKRNPQGFE</sequence>
<dbReference type="EMBL" id="AK053760">
    <property type="protein sequence ID" value="BAC35510.1"/>
    <property type="molecule type" value="mRNA"/>
</dbReference>
<dbReference type="EMBL" id="AK082275">
    <property type="protein sequence ID" value="BAC38452.1"/>
    <property type="molecule type" value="mRNA"/>
</dbReference>
<dbReference type="EMBL" id="AK149334">
    <property type="protein sequence ID" value="BAE28817.1"/>
    <property type="molecule type" value="mRNA"/>
</dbReference>
<dbReference type="EMBL" id="BC059258">
    <property type="protein sequence ID" value="AAH59258.1"/>
    <property type="molecule type" value="mRNA"/>
</dbReference>
<dbReference type="CCDS" id="CCDS21733.1">
    <molecule id="Q8BPM6-1"/>
</dbReference>
<dbReference type="RefSeq" id="NP_001033713.1">
    <molecule id="Q8BPM6-1"/>
    <property type="nucleotide sequence ID" value="NM_001038624.1"/>
</dbReference>
<dbReference type="RefSeq" id="NP_001298090.1">
    <property type="nucleotide sequence ID" value="NM_001311161.1"/>
</dbReference>
<dbReference type="RefSeq" id="NP_848895.2">
    <molecule id="Q8BPM6-3"/>
    <property type="nucleotide sequence ID" value="NM_178780.3"/>
</dbReference>
<dbReference type="RefSeq" id="XP_006508005.1">
    <molecule id="Q8BPM6-2"/>
    <property type="nucleotide sequence ID" value="XM_006507942.3"/>
</dbReference>
<dbReference type="RefSeq" id="XP_006508006.1">
    <molecule id="Q8BPM6-2"/>
    <property type="nucleotide sequence ID" value="XM_006507943.5"/>
</dbReference>
<dbReference type="SMR" id="Q8BPM6"/>
<dbReference type="FunCoup" id="Q8BPM6">
    <property type="interactions" value="643"/>
</dbReference>
<dbReference type="STRING" id="10090.ENSMUSP00000056990"/>
<dbReference type="GlyGen" id="Q8BPM6">
    <property type="glycosylation" value="1 site, 1 N-linked glycan (1 site)"/>
</dbReference>
<dbReference type="PhosphoSitePlus" id="Q8BPM6"/>
<dbReference type="PaxDb" id="10090-ENSMUSP00000056990"/>
<dbReference type="ProteomicsDB" id="253129">
    <molecule id="Q8BPM6-1"/>
</dbReference>
<dbReference type="ProteomicsDB" id="253130">
    <molecule id="Q8BPM6-2"/>
</dbReference>
<dbReference type="ProteomicsDB" id="253131">
    <molecule id="Q8BPM6-3"/>
</dbReference>
<dbReference type="Antibodypedia" id="24077">
    <property type="antibodies" value="86 antibodies from 18 providers"/>
</dbReference>
<dbReference type="DNASU" id="320360"/>
<dbReference type="Ensembl" id="ENSMUST00000055993.13">
    <molecule id="Q8BPM6-1"/>
    <property type="protein sequence ID" value="ENSMUSP00000056990.7"/>
    <property type="gene ID" value="ENSMUSG00000048330.15"/>
</dbReference>
<dbReference type="GeneID" id="320360"/>
<dbReference type="KEGG" id="mmu:320360"/>
<dbReference type="UCSC" id="uc009jdg.1">
    <molecule id="Q8BPM6-1"/>
    <property type="organism name" value="mouse"/>
</dbReference>
<dbReference type="UCSC" id="uc009jdi.1">
    <molecule id="Q8BPM6-3"/>
    <property type="organism name" value="mouse"/>
</dbReference>
<dbReference type="AGR" id="MGI:2443887"/>
<dbReference type="CTD" id="79608"/>
<dbReference type="MGI" id="MGI:2443887">
    <property type="gene designation" value="Ric3"/>
</dbReference>
<dbReference type="VEuPathDB" id="HostDB:ENSMUSG00000048330"/>
<dbReference type="eggNOG" id="ENOG502RZG3">
    <property type="taxonomic scope" value="Eukaryota"/>
</dbReference>
<dbReference type="GeneTree" id="ENSGT00440000034107"/>
<dbReference type="HOGENOM" id="CLU_062635_1_0_1"/>
<dbReference type="InParanoid" id="Q8BPM6"/>
<dbReference type="OMA" id="HQMPSDG"/>
<dbReference type="OrthoDB" id="9938788at2759"/>
<dbReference type="PhylomeDB" id="Q8BPM6"/>
<dbReference type="TreeFam" id="TF333291"/>
<dbReference type="BioGRID-ORCS" id="320360">
    <property type="hits" value="2 hits in 77 CRISPR screens"/>
</dbReference>
<dbReference type="PRO" id="PR:Q8BPM6"/>
<dbReference type="Proteomes" id="UP000000589">
    <property type="component" value="Chromosome 7"/>
</dbReference>
<dbReference type="RNAct" id="Q8BPM6">
    <property type="molecule type" value="protein"/>
</dbReference>
<dbReference type="Bgee" id="ENSMUSG00000048330">
    <property type="expression patterns" value="Expressed in rostral migratory stream and 130 other cell types or tissues"/>
</dbReference>
<dbReference type="ExpressionAtlas" id="Q8BPM6">
    <property type="expression patterns" value="baseline and differential"/>
</dbReference>
<dbReference type="GO" id="GO:0005783">
    <property type="term" value="C:endoplasmic reticulum"/>
    <property type="evidence" value="ECO:0000314"/>
    <property type="project" value="MGI"/>
</dbReference>
<dbReference type="GO" id="GO:0005789">
    <property type="term" value="C:endoplasmic reticulum membrane"/>
    <property type="evidence" value="ECO:0007669"/>
    <property type="project" value="UniProtKB-SubCell"/>
</dbReference>
<dbReference type="GO" id="GO:0016020">
    <property type="term" value="C:membrane"/>
    <property type="evidence" value="ECO:0000314"/>
    <property type="project" value="MGI"/>
</dbReference>
<dbReference type="GO" id="GO:0045202">
    <property type="term" value="C:synapse"/>
    <property type="evidence" value="ECO:0007669"/>
    <property type="project" value="GOC"/>
</dbReference>
<dbReference type="GO" id="GO:0033130">
    <property type="term" value="F:acetylcholine receptor binding"/>
    <property type="evidence" value="ECO:0000266"/>
    <property type="project" value="MGI"/>
</dbReference>
<dbReference type="GO" id="GO:0044183">
    <property type="term" value="F:protein folding chaperone"/>
    <property type="evidence" value="ECO:0000314"/>
    <property type="project" value="MGI"/>
</dbReference>
<dbReference type="GO" id="GO:0007204">
    <property type="term" value="P:positive regulation of cytosolic calcium ion concentration"/>
    <property type="evidence" value="ECO:0000266"/>
    <property type="project" value="MGI"/>
</dbReference>
<dbReference type="GO" id="GO:2000010">
    <property type="term" value="P:positive regulation of protein localization to cell surface"/>
    <property type="evidence" value="ECO:0007669"/>
    <property type="project" value="Ensembl"/>
</dbReference>
<dbReference type="GO" id="GO:0065003">
    <property type="term" value="P:protein-containing complex assembly"/>
    <property type="evidence" value="ECO:0000314"/>
    <property type="project" value="MGI"/>
</dbReference>
<dbReference type="GO" id="GO:0007271">
    <property type="term" value="P:synaptic transmission, cholinergic"/>
    <property type="evidence" value="ECO:0000266"/>
    <property type="project" value="MGI"/>
</dbReference>
<dbReference type="InterPro" id="IPR026160">
    <property type="entry name" value="Ric3"/>
</dbReference>
<dbReference type="InterPro" id="IPR032763">
    <property type="entry name" value="RIC3_N"/>
</dbReference>
<dbReference type="PANTHER" id="PTHR21723:SF3">
    <property type="entry name" value="PROTEIN RIC-3"/>
    <property type="match status" value="1"/>
</dbReference>
<dbReference type="PANTHER" id="PTHR21723">
    <property type="entry name" value="RESISTANCE TO INHIBITORS OF CHOLINESTERASE PROTEIN 3 RIC3"/>
    <property type="match status" value="1"/>
</dbReference>
<dbReference type="Pfam" id="PF15361">
    <property type="entry name" value="RIC3"/>
    <property type="match status" value="1"/>
</dbReference>
<organism>
    <name type="scientific">Mus musculus</name>
    <name type="common">Mouse</name>
    <dbReference type="NCBI Taxonomy" id="10090"/>
    <lineage>
        <taxon>Eukaryota</taxon>
        <taxon>Metazoa</taxon>
        <taxon>Chordata</taxon>
        <taxon>Craniata</taxon>
        <taxon>Vertebrata</taxon>
        <taxon>Euteleostomi</taxon>
        <taxon>Mammalia</taxon>
        <taxon>Eutheria</taxon>
        <taxon>Euarchontoglires</taxon>
        <taxon>Glires</taxon>
        <taxon>Rodentia</taxon>
        <taxon>Myomorpha</taxon>
        <taxon>Muroidea</taxon>
        <taxon>Muridae</taxon>
        <taxon>Murinae</taxon>
        <taxon>Mus</taxon>
        <taxon>Mus</taxon>
    </lineage>
</organism>
<proteinExistence type="evidence at protein level"/>
<keyword id="KW-0007">Acetylation</keyword>
<keyword id="KW-0025">Alternative splicing</keyword>
<keyword id="KW-0143">Chaperone</keyword>
<keyword id="KW-0175">Coiled coil</keyword>
<keyword id="KW-0256">Endoplasmic reticulum</keyword>
<keyword id="KW-1017">Isopeptide bond</keyword>
<keyword id="KW-0472">Membrane</keyword>
<keyword id="KW-1185">Reference proteome</keyword>
<keyword id="KW-0732">Signal</keyword>
<keyword id="KW-0812">Transmembrane</keyword>
<keyword id="KW-1133">Transmembrane helix</keyword>
<keyword id="KW-0832">Ubl conjugation</keyword>
<feature type="signal peptide" evidence="5">
    <location>
        <begin position="1"/>
        <end position="31"/>
    </location>
</feature>
<feature type="chain" id="PRO_0000302732" description="Protein RIC-3">
    <location>
        <begin position="32"/>
        <end position="367"/>
    </location>
</feature>
<feature type="topological domain" description="Lumenal" evidence="2">
    <location>
        <begin position="32"/>
        <end position="95"/>
    </location>
</feature>
<feature type="transmembrane region" description="Helical" evidence="2">
    <location>
        <begin position="96"/>
        <end position="116"/>
    </location>
</feature>
<feature type="topological domain" description="Cytoplasmic" evidence="2">
    <location>
        <begin position="117"/>
        <end position="367"/>
    </location>
</feature>
<feature type="region of interest" description="Disordered" evidence="3">
    <location>
        <begin position="30"/>
        <end position="67"/>
    </location>
</feature>
<feature type="region of interest" description="Disordered" evidence="3">
    <location>
        <begin position="262"/>
        <end position="301"/>
    </location>
</feature>
<feature type="region of interest" description="Disordered" evidence="3">
    <location>
        <begin position="322"/>
        <end position="367"/>
    </location>
</feature>
<feature type="coiled-coil region" evidence="5">
    <location>
        <begin position="138"/>
        <end position="169"/>
    </location>
</feature>
<feature type="compositionally biased region" description="Basic and acidic residues" evidence="3">
    <location>
        <begin position="271"/>
        <end position="280"/>
    </location>
</feature>
<feature type="compositionally biased region" description="Basic residues" evidence="3">
    <location>
        <begin position="358"/>
        <end position="367"/>
    </location>
</feature>
<feature type="modified residue" description="N6-acetyllysine; alternate" evidence="1">
    <location>
        <position position="201"/>
    </location>
</feature>
<feature type="cross-link" description="Glycyl lysine isopeptide (Lys-Gly) (interchain with G-Cter in ubiquitin); alternate" evidence="1">
    <location>
        <position position="201"/>
    </location>
</feature>
<feature type="splice variant" id="VSP_027944" description="In isoform 2." evidence="7">
    <location>
        <begin position="1"/>
        <end position="159"/>
    </location>
</feature>
<feature type="splice variant" id="VSP_027945" description="In isoform 3." evidence="8">
    <original>YPEETY</original>
    <variation>KMPLPC</variation>
    <location>
        <begin position="223"/>
        <end position="228"/>
    </location>
</feature>
<feature type="splice variant" id="VSP_027946" description="In isoform 3." evidence="8">
    <location>
        <begin position="229"/>
        <end position="367"/>
    </location>
</feature>
<feature type="sequence conflict" description="In Ref. 1; BAC38452." evidence="9" ref="1">
    <original>R</original>
    <variation>Q</variation>
    <location>
        <position position="46"/>
    </location>
</feature>
<name>RIC3_MOUSE</name>
<comment type="function">
    <text evidence="1 5 6">Molecular chaperone which promotes the proper subunit assembly and surface trafficking of alpha-7 (CHRNA7) nicotinic acetylcholine receptor (PubMed:19812337, PubMed:32204458). Promotes the proper subunit assembly and cell surface expression of alpha-8 (CHRNA8) nicotinic acetylcholine receptor (By similarity). May also promote functional expression of homomeric serotoninergic 5-HT3 receptors, and of heteromeric acetylcholine receptors alpha-3/beta-2, alpha-3/beta-4, alpha-4/beta-2 and alpha-4/beta-4 (By similarity).</text>
</comment>
<comment type="subunit">
    <text evidence="1">Monomer and homodimer. Interacts with CHRNA7, CHRNA3, CHRNA4, CHRNB2, CHRNB4 and HTR3A (By similarity).</text>
</comment>
<comment type="subcellular location">
    <subcellularLocation>
        <location evidence="5">Endoplasmic reticulum membrane</location>
        <topology evidence="5">Single-pass membrane protein</topology>
    </subcellularLocation>
</comment>
<comment type="alternative products">
    <event type="alternative splicing"/>
    <isoform>
        <id>Q8BPM6-1</id>
        <name>1</name>
        <sequence type="displayed"/>
    </isoform>
    <isoform>
        <id>Q8BPM6-2</id>
        <name>2</name>
        <sequence type="described" ref="VSP_027944"/>
    </isoform>
    <isoform>
        <id>Q8BPM6-3</id>
        <name>3</name>
        <sequence type="described" ref="VSP_027945 VSP_027946"/>
    </isoform>
</comment>
<comment type="tissue specificity">
    <text evidence="4">Expressed in brain, with highest levels in hippocampus, cerebellum and superior colliculus.</text>
</comment>
<comment type="domain">
    <text>The coiled-coil domain mediates transient homodimerization with other acetylcholine receptor-bound RIC3 molecules, promoting stepwise ACHR homomeric assembly at the membrane.</text>
</comment>
<comment type="similarity">
    <text evidence="9">Belongs to the ric-3 family.</text>
</comment>
<evidence type="ECO:0000250" key="1">
    <source>
        <dbReference type="UniProtKB" id="Q7Z5B4"/>
    </source>
</evidence>
<evidence type="ECO:0000255" key="2"/>
<evidence type="ECO:0000256" key="3">
    <source>
        <dbReference type="SAM" id="MobiDB-lite"/>
    </source>
</evidence>
<evidence type="ECO:0000269" key="4">
    <source>
    </source>
</evidence>
<evidence type="ECO:0000269" key="5">
    <source>
    </source>
</evidence>
<evidence type="ECO:0000269" key="6">
    <source>
    </source>
</evidence>
<evidence type="ECO:0000303" key="7">
    <source>
    </source>
</evidence>
<evidence type="ECO:0000303" key="8">
    <source>
    </source>
</evidence>
<evidence type="ECO:0000305" key="9"/>
<accession>Q8BPM6</accession>
<accession>Q6PCM7</accession>
<accession>Q8C4G2</accession>